<name>LEXA_RUEST</name>
<evidence type="ECO:0000255" key="1">
    <source>
        <dbReference type="HAMAP-Rule" id="MF_00015"/>
    </source>
</evidence>
<dbReference type="EC" id="3.4.21.88" evidence="1"/>
<dbReference type="EMBL" id="CP000377">
    <property type="protein sequence ID" value="ABF63868.1"/>
    <property type="molecule type" value="Genomic_DNA"/>
</dbReference>
<dbReference type="RefSeq" id="WP_011538475.1">
    <property type="nucleotide sequence ID" value="NC_008044.1"/>
</dbReference>
<dbReference type="SMR" id="Q1GHJ8"/>
<dbReference type="STRING" id="292414.TM1040_1135"/>
<dbReference type="MEROPS" id="S24.001"/>
<dbReference type="KEGG" id="sit:TM1040_1135"/>
<dbReference type="eggNOG" id="COG1974">
    <property type="taxonomic scope" value="Bacteria"/>
</dbReference>
<dbReference type="HOGENOM" id="CLU_066192_45_2_5"/>
<dbReference type="OrthoDB" id="9802364at2"/>
<dbReference type="Proteomes" id="UP000000636">
    <property type="component" value="Chromosome"/>
</dbReference>
<dbReference type="GO" id="GO:0003677">
    <property type="term" value="F:DNA binding"/>
    <property type="evidence" value="ECO:0007669"/>
    <property type="project" value="UniProtKB-UniRule"/>
</dbReference>
<dbReference type="GO" id="GO:0004252">
    <property type="term" value="F:serine-type endopeptidase activity"/>
    <property type="evidence" value="ECO:0007669"/>
    <property type="project" value="UniProtKB-UniRule"/>
</dbReference>
<dbReference type="GO" id="GO:0006281">
    <property type="term" value="P:DNA repair"/>
    <property type="evidence" value="ECO:0007669"/>
    <property type="project" value="UniProtKB-UniRule"/>
</dbReference>
<dbReference type="GO" id="GO:0006260">
    <property type="term" value="P:DNA replication"/>
    <property type="evidence" value="ECO:0007669"/>
    <property type="project" value="UniProtKB-UniRule"/>
</dbReference>
<dbReference type="GO" id="GO:0045892">
    <property type="term" value="P:negative regulation of DNA-templated transcription"/>
    <property type="evidence" value="ECO:0007669"/>
    <property type="project" value="UniProtKB-UniRule"/>
</dbReference>
<dbReference type="GO" id="GO:0006508">
    <property type="term" value="P:proteolysis"/>
    <property type="evidence" value="ECO:0007669"/>
    <property type="project" value="InterPro"/>
</dbReference>
<dbReference type="GO" id="GO:0009432">
    <property type="term" value="P:SOS response"/>
    <property type="evidence" value="ECO:0007669"/>
    <property type="project" value="UniProtKB-UniRule"/>
</dbReference>
<dbReference type="CDD" id="cd06529">
    <property type="entry name" value="S24_LexA-like"/>
    <property type="match status" value="1"/>
</dbReference>
<dbReference type="FunFam" id="2.10.109.10:FF:000001">
    <property type="entry name" value="LexA repressor"/>
    <property type="match status" value="1"/>
</dbReference>
<dbReference type="Gene3D" id="2.10.109.10">
    <property type="entry name" value="Umud Fragment, subunit A"/>
    <property type="match status" value="1"/>
</dbReference>
<dbReference type="Gene3D" id="1.10.10.10">
    <property type="entry name" value="Winged helix-like DNA-binding domain superfamily/Winged helix DNA-binding domain"/>
    <property type="match status" value="1"/>
</dbReference>
<dbReference type="HAMAP" id="MF_00015">
    <property type="entry name" value="LexA"/>
    <property type="match status" value="1"/>
</dbReference>
<dbReference type="InterPro" id="IPR006200">
    <property type="entry name" value="LexA"/>
</dbReference>
<dbReference type="InterPro" id="IPR039418">
    <property type="entry name" value="LexA-like"/>
</dbReference>
<dbReference type="InterPro" id="IPR036286">
    <property type="entry name" value="LexA/Signal_pep-like_sf"/>
</dbReference>
<dbReference type="InterPro" id="IPR006199">
    <property type="entry name" value="LexA_DNA-bd_dom"/>
</dbReference>
<dbReference type="InterPro" id="IPR050077">
    <property type="entry name" value="LexA_repressor"/>
</dbReference>
<dbReference type="InterPro" id="IPR006197">
    <property type="entry name" value="Peptidase_S24_LexA"/>
</dbReference>
<dbReference type="InterPro" id="IPR015927">
    <property type="entry name" value="Peptidase_S24_S26A/B/C"/>
</dbReference>
<dbReference type="InterPro" id="IPR036388">
    <property type="entry name" value="WH-like_DNA-bd_sf"/>
</dbReference>
<dbReference type="InterPro" id="IPR036390">
    <property type="entry name" value="WH_DNA-bd_sf"/>
</dbReference>
<dbReference type="NCBIfam" id="TIGR00498">
    <property type="entry name" value="lexA"/>
    <property type="match status" value="1"/>
</dbReference>
<dbReference type="PANTHER" id="PTHR33516">
    <property type="entry name" value="LEXA REPRESSOR"/>
    <property type="match status" value="1"/>
</dbReference>
<dbReference type="PANTHER" id="PTHR33516:SF2">
    <property type="entry name" value="LEXA REPRESSOR-RELATED"/>
    <property type="match status" value="1"/>
</dbReference>
<dbReference type="Pfam" id="PF01726">
    <property type="entry name" value="LexA_DNA_bind"/>
    <property type="match status" value="1"/>
</dbReference>
<dbReference type="Pfam" id="PF00717">
    <property type="entry name" value="Peptidase_S24"/>
    <property type="match status" value="1"/>
</dbReference>
<dbReference type="PRINTS" id="PR00726">
    <property type="entry name" value="LEXASERPTASE"/>
</dbReference>
<dbReference type="SUPFAM" id="SSF51306">
    <property type="entry name" value="LexA/Signal peptidase"/>
    <property type="match status" value="1"/>
</dbReference>
<dbReference type="SUPFAM" id="SSF46785">
    <property type="entry name" value="Winged helix' DNA-binding domain"/>
    <property type="match status" value="1"/>
</dbReference>
<keyword id="KW-0068">Autocatalytic cleavage</keyword>
<keyword id="KW-0227">DNA damage</keyword>
<keyword id="KW-0234">DNA repair</keyword>
<keyword id="KW-0235">DNA replication</keyword>
<keyword id="KW-0238">DNA-binding</keyword>
<keyword id="KW-0378">Hydrolase</keyword>
<keyword id="KW-1185">Reference proteome</keyword>
<keyword id="KW-0678">Repressor</keyword>
<keyword id="KW-0742">SOS response</keyword>
<keyword id="KW-0804">Transcription</keyword>
<keyword id="KW-0805">Transcription regulation</keyword>
<accession>Q1GHJ8</accession>
<protein>
    <recommendedName>
        <fullName evidence="1">LexA repressor</fullName>
        <ecNumber evidence="1">3.4.21.88</ecNumber>
    </recommendedName>
</protein>
<organism>
    <name type="scientific">Ruegeria sp. (strain TM1040)</name>
    <name type="common">Silicibacter sp.</name>
    <dbReference type="NCBI Taxonomy" id="292414"/>
    <lineage>
        <taxon>Bacteria</taxon>
        <taxon>Pseudomonadati</taxon>
        <taxon>Pseudomonadota</taxon>
        <taxon>Alphaproteobacteria</taxon>
        <taxon>Rhodobacterales</taxon>
        <taxon>Roseobacteraceae</taxon>
        <taxon>Ruegeria</taxon>
    </lineage>
</organism>
<proteinExistence type="inferred from homology"/>
<gene>
    <name evidence="1" type="primary">lexA</name>
    <name type="ordered locus">TM1040_1135</name>
</gene>
<comment type="function">
    <text evidence="1">Represses a number of genes involved in the response to DNA damage (SOS response), including recA and lexA. In the presence of single-stranded DNA, RecA interacts with LexA causing an autocatalytic cleavage which disrupts the DNA-binding part of LexA, leading to derepression of the SOS regulon and eventually DNA repair.</text>
</comment>
<comment type="catalytic activity">
    <reaction evidence="1">
        <text>Hydrolysis of Ala-|-Gly bond in repressor LexA.</text>
        <dbReference type="EC" id="3.4.21.88"/>
    </reaction>
</comment>
<comment type="subunit">
    <text evidence="1">Homodimer.</text>
</comment>
<comment type="similarity">
    <text evidence="1">Belongs to the peptidase S24 family.</text>
</comment>
<sequence>MLTKKQLQLLEFIHKRLQKDGVPPSFDEMKTALDLRSKSGIHRLITALEERGFIRRLAHRARAIEVIRLPDSLGGGGALGAASDGFQPKVIAGGRGDSADGGAAAELKPVADTGATELTIMGRIAAGVPIEAINQAAAHVAVPNAMLSSSGQHYALEVRGDSMIDAGINDGDVVVIRETDAADNGDIVVALVEGHEATLKRFERKGRMIELHAANPAYPTRSYTEDQVKVQGRLVGLIRTY</sequence>
<reference key="1">
    <citation type="submission" date="2006-05" db="EMBL/GenBank/DDBJ databases">
        <title>Complete sequence of chromosome of Silicibacter sp. TM1040.</title>
        <authorList>
            <consortium name="US DOE Joint Genome Institute"/>
            <person name="Copeland A."/>
            <person name="Lucas S."/>
            <person name="Lapidus A."/>
            <person name="Barry K."/>
            <person name="Detter J.C."/>
            <person name="Glavina del Rio T."/>
            <person name="Hammon N."/>
            <person name="Israni S."/>
            <person name="Dalin E."/>
            <person name="Tice H."/>
            <person name="Pitluck S."/>
            <person name="Brettin T."/>
            <person name="Bruce D."/>
            <person name="Han C."/>
            <person name="Tapia R."/>
            <person name="Goodwin L."/>
            <person name="Thompson L.S."/>
            <person name="Gilna P."/>
            <person name="Schmutz J."/>
            <person name="Larimer F."/>
            <person name="Land M."/>
            <person name="Hauser L."/>
            <person name="Kyrpides N."/>
            <person name="Kim E."/>
            <person name="Belas R."/>
            <person name="Moran M.A."/>
            <person name="Buchan A."/>
            <person name="Gonzalez J.M."/>
            <person name="Schell M.A."/>
            <person name="Sun F."/>
            <person name="Richardson P."/>
        </authorList>
    </citation>
    <scope>NUCLEOTIDE SEQUENCE [LARGE SCALE GENOMIC DNA]</scope>
    <source>
        <strain>TM1040</strain>
    </source>
</reference>
<feature type="chain" id="PRO_1000001347" description="LexA repressor">
    <location>
        <begin position="1"/>
        <end position="241"/>
    </location>
</feature>
<feature type="DNA-binding region" description="H-T-H motif" evidence="1">
    <location>
        <begin position="26"/>
        <end position="46"/>
    </location>
</feature>
<feature type="active site" description="For autocatalytic cleavage activity" evidence="1">
    <location>
        <position position="162"/>
    </location>
</feature>
<feature type="active site" description="For autocatalytic cleavage activity" evidence="1">
    <location>
        <position position="200"/>
    </location>
</feature>
<feature type="site" description="Cleavage; by autolysis" evidence="1">
    <location>
        <begin position="126"/>
        <end position="127"/>
    </location>
</feature>